<sequence>MTFSPEPAHQHGQPPRTAILLINLGTPDAPTPKAVGRYLKAFLSDPRVVEIPRLAWLPILHGLILPFRSRASAMKYESIWLREAHMTGSPLLVYTERQAHALQLLMQQQGHDVTVACAMRYGNPSIESVMEALRRQGTEQILLLPLYPQFSGTTTATAFDEAFRVLSTWRNQPELRLVKHFHDHPAYISALHKQVGGYWAQHGKPDFARGDKLILSFHGLPRRLLDLGDPYHCECLKTGRLLGEALGLQPGQFQVTFQSRFGKAEWLQPYTAPTLAELGKVGTQRVDVFCPGFPADCIETLEEIAMEGQSEFRLAGGQDFHFIPCLNDAEAWIAGLADIALQHLQGWPLNVPHPHELEARRSRAQARGAGA</sequence>
<keyword id="KW-0963">Cytoplasm</keyword>
<keyword id="KW-0350">Heme biosynthesis</keyword>
<keyword id="KW-0408">Iron</keyword>
<keyword id="KW-0456">Lyase</keyword>
<keyword id="KW-0479">Metal-binding</keyword>
<keyword id="KW-0627">Porphyrin biosynthesis</keyword>
<keyword id="KW-1185">Reference proteome</keyword>
<gene>
    <name evidence="1" type="primary">hemH</name>
    <name type="ordered locus">Rmet_1001</name>
</gene>
<organism>
    <name type="scientific">Cupriavidus metallidurans (strain ATCC 43123 / DSM 2839 / NBRC 102507 / CH34)</name>
    <name type="common">Ralstonia metallidurans</name>
    <dbReference type="NCBI Taxonomy" id="266264"/>
    <lineage>
        <taxon>Bacteria</taxon>
        <taxon>Pseudomonadati</taxon>
        <taxon>Pseudomonadota</taxon>
        <taxon>Betaproteobacteria</taxon>
        <taxon>Burkholderiales</taxon>
        <taxon>Burkholderiaceae</taxon>
        <taxon>Cupriavidus</taxon>
    </lineage>
</organism>
<feature type="chain" id="PRO_1000019357" description="Ferrochelatase">
    <location>
        <begin position="1"/>
        <end position="371"/>
    </location>
</feature>
<feature type="binding site" evidence="1">
    <location>
        <position position="218"/>
    </location>
    <ligand>
        <name>Fe cation</name>
        <dbReference type="ChEBI" id="CHEBI:24875"/>
    </ligand>
</feature>
<feature type="binding site" evidence="1">
    <location>
        <position position="299"/>
    </location>
    <ligand>
        <name>Fe cation</name>
        <dbReference type="ChEBI" id="CHEBI:24875"/>
    </ligand>
</feature>
<evidence type="ECO:0000255" key="1">
    <source>
        <dbReference type="HAMAP-Rule" id="MF_00323"/>
    </source>
</evidence>
<name>HEMH_CUPMC</name>
<dbReference type="EC" id="4.98.1.1" evidence="1"/>
<dbReference type="EMBL" id="CP000352">
    <property type="protein sequence ID" value="ABF07887.1"/>
    <property type="molecule type" value="Genomic_DNA"/>
</dbReference>
<dbReference type="RefSeq" id="WP_011515801.1">
    <property type="nucleotide sequence ID" value="NC_007973.1"/>
</dbReference>
<dbReference type="SMR" id="Q1LPN9"/>
<dbReference type="STRING" id="266264.Rmet_1001"/>
<dbReference type="KEGG" id="rme:Rmet_1001"/>
<dbReference type="eggNOG" id="COG0276">
    <property type="taxonomic scope" value="Bacteria"/>
</dbReference>
<dbReference type="HOGENOM" id="CLU_018884_0_0_4"/>
<dbReference type="UniPathway" id="UPA00252">
    <property type="reaction ID" value="UER00325"/>
</dbReference>
<dbReference type="Proteomes" id="UP000002429">
    <property type="component" value="Chromosome"/>
</dbReference>
<dbReference type="GO" id="GO:0005737">
    <property type="term" value="C:cytoplasm"/>
    <property type="evidence" value="ECO:0007669"/>
    <property type="project" value="UniProtKB-SubCell"/>
</dbReference>
<dbReference type="GO" id="GO:0004325">
    <property type="term" value="F:ferrochelatase activity"/>
    <property type="evidence" value="ECO:0007669"/>
    <property type="project" value="UniProtKB-UniRule"/>
</dbReference>
<dbReference type="GO" id="GO:0046872">
    <property type="term" value="F:metal ion binding"/>
    <property type="evidence" value="ECO:0007669"/>
    <property type="project" value="UniProtKB-KW"/>
</dbReference>
<dbReference type="GO" id="GO:0006783">
    <property type="term" value="P:heme biosynthetic process"/>
    <property type="evidence" value="ECO:0007669"/>
    <property type="project" value="UniProtKB-UniRule"/>
</dbReference>
<dbReference type="CDD" id="cd00419">
    <property type="entry name" value="Ferrochelatase_C"/>
    <property type="match status" value="1"/>
</dbReference>
<dbReference type="CDD" id="cd03411">
    <property type="entry name" value="Ferrochelatase_N"/>
    <property type="match status" value="1"/>
</dbReference>
<dbReference type="FunFam" id="3.40.50.1400:FF:000002">
    <property type="entry name" value="Ferrochelatase"/>
    <property type="match status" value="1"/>
</dbReference>
<dbReference type="Gene3D" id="3.40.50.1400">
    <property type="match status" value="2"/>
</dbReference>
<dbReference type="HAMAP" id="MF_00323">
    <property type="entry name" value="Ferrochelatase"/>
    <property type="match status" value="1"/>
</dbReference>
<dbReference type="InterPro" id="IPR001015">
    <property type="entry name" value="Ferrochelatase"/>
</dbReference>
<dbReference type="InterPro" id="IPR019772">
    <property type="entry name" value="Ferrochelatase_AS"/>
</dbReference>
<dbReference type="InterPro" id="IPR033644">
    <property type="entry name" value="Ferrochelatase_C"/>
</dbReference>
<dbReference type="InterPro" id="IPR033659">
    <property type="entry name" value="Ferrochelatase_N"/>
</dbReference>
<dbReference type="NCBIfam" id="TIGR00109">
    <property type="entry name" value="hemH"/>
    <property type="match status" value="1"/>
</dbReference>
<dbReference type="PANTHER" id="PTHR11108">
    <property type="entry name" value="FERROCHELATASE"/>
    <property type="match status" value="1"/>
</dbReference>
<dbReference type="PANTHER" id="PTHR11108:SF1">
    <property type="entry name" value="FERROCHELATASE, MITOCHONDRIAL"/>
    <property type="match status" value="1"/>
</dbReference>
<dbReference type="Pfam" id="PF00762">
    <property type="entry name" value="Ferrochelatase"/>
    <property type="match status" value="1"/>
</dbReference>
<dbReference type="SUPFAM" id="SSF53800">
    <property type="entry name" value="Chelatase"/>
    <property type="match status" value="1"/>
</dbReference>
<dbReference type="PROSITE" id="PS00534">
    <property type="entry name" value="FERROCHELATASE"/>
    <property type="match status" value="1"/>
</dbReference>
<comment type="function">
    <text evidence="1">Catalyzes the ferrous insertion into protoporphyrin IX.</text>
</comment>
<comment type="catalytic activity">
    <reaction evidence="1">
        <text>heme b + 2 H(+) = protoporphyrin IX + Fe(2+)</text>
        <dbReference type="Rhea" id="RHEA:22584"/>
        <dbReference type="ChEBI" id="CHEBI:15378"/>
        <dbReference type="ChEBI" id="CHEBI:29033"/>
        <dbReference type="ChEBI" id="CHEBI:57306"/>
        <dbReference type="ChEBI" id="CHEBI:60344"/>
        <dbReference type="EC" id="4.98.1.1"/>
    </reaction>
</comment>
<comment type="pathway">
    <text evidence="1">Porphyrin-containing compound metabolism; protoheme biosynthesis; protoheme from protoporphyrin-IX: step 1/1.</text>
</comment>
<comment type="subcellular location">
    <subcellularLocation>
        <location evidence="1">Cytoplasm</location>
    </subcellularLocation>
</comment>
<comment type="similarity">
    <text evidence="1">Belongs to the ferrochelatase family.</text>
</comment>
<proteinExistence type="inferred from homology"/>
<protein>
    <recommendedName>
        <fullName evidence="1">Ferrochelatase</fullName>
        <ecNumber evidence="1">4.98.1.1</ecNumber>
    </recommendedName>
    <alternativeName>
        <fullName evidence="1">Heme synthase</fullName>
    </alternativeName>
    <alternativeName>
        <fullName evidence="1">Protoheme ferro-lyase</fullName>
    </alternativeName>
</protein>
<reference key="1">
    <citation type="journal article" date="2010" name="PLoS ONE">
        <title>The complete genome sequence of Cupriavidus metallidurans strain CH34, a master survivalist in harsh and anthropogenic environments.</title>
        <authorList>
            <person name="Janssen P.J."/>
            <person name="Van Houdt R."/>
            <person name="Moors H."/>
            <person name="Monsieurs P."/>
            <person name="Morin N."/>
            <person name="Michaux A."/>
            <person name="Benotmane M.A."/>
            <person name="Leys N."/>
            <person name="Vallaeys T."/>
            <person name="Lapidus A."/>
            <person name="Monchy S."/>
            <person name="Medigue C."/>
            <person name="Taghavi S."/>
            <person name="McCorkle S."/>
            <person name="Dunn J."/>
            <person name="van der Lelie D."/>
            <person name="Mergeay M."/>
        </authorList>
    </citation>
    <scope>NUCLEOTIDE SEQUENCE [LARGE SCALE GENOMIC DNA]</scope>
    <source>
        <strain>ATCC 43123 / DSM 2839 / NBRC 102507 / CH34</strain>
    </source>
</reference>
<accession>Q1LPN9</accession>